<accession>A1D4F1</accession>
<reference key="1">
    <citation type="journal article" date="2008" name="PLoS Genet.">
        <title>Genomic islands in the pathogenic filamentous fungus Aspergillus fumigatus.</title>
        <authorList>
            <person name="Fedorova N.D."/>
            <person name="Khaldi N."/>
            <person name="Joardar V.S."/>
            <person name="Maiti R."/>
            <person name="Amedeo P."/>
            <person name="Anderson M.J."/>
            <person name="Crabtree J."/>
            <person name="Silva J.C."/>
            <person name="Badger J.H."/>
            <person name="Albarraq A."/>
            <person name="Angiuoli S."/>
            <person name="Bussey H."/>
            <person name="Bowyer P."/>
            <person name="Cotty P.J."/>
            <person name="Dyer P.S."/>
            <person name="Egan A."/>
            <person name="Galens K."/>
            <person name="Fraser-Liggett C.M."/>
            <person name="Haas B.J."/>
            <person name="Inman J.M."/>
            <person name="Kent R."/>
            <person name="Lemieux S."/>
            <person name="Malavazi I."/>
            <person name="Orvis J."/>
            <person name="Roemer T."/>
            <person name="Ronning C.M."/>
            <person name="Sundaram J.P."/>
            <person name="Sutton G."/>
            <person name="Turner G."/>
            <person name="Venter J.C."/>
            <person name="White O.R."/>
            <person name="Whitty B.R."/>
            <person name="Youngman P."/>
            <person name="Wolfe K.H."/>
            <person name="Goldman G.H."/>
            <person name="Wortman J.R."/>
            <person name="Jiang B."/>
            <person name="Denning D.W."/>
            <person name="Nierman W.C."/>
        </authorList>
    </citation>
    <scope>NUCLEOTIDE SEQUENCE [LARGE SCALE GENOMIC DNA]</scope>
    <source>
        <strain>ATCC 1020 / DSM 3700 / CBS 544.65 / FGSC A1164 / JCM 1740 / NRRL 181 / WB 181</strain>
    </source>
</reference>
<name>XGEA_NEOFI</name>
<protein>
    <recommendedName>
        <fullName>Probable xyloglucan-specific endo-beta-1,4-glucanase A</fullName>
        <ecNumber>3.2.1.151</ecNumber>
    </recommendedName>
    <alternativeName>
        <fullName>Xyloglucanase A</fullName>
    </alternativeName>
    <alternativeName>
        <fullName>Xyloglucanendohydrolase A</fullName>
    </alternativeName>
</protein>
<sequence>MKFSLSVALSLAAATAQAATQFCDQWGSVTEGNYILYNNLWGQAQATSGSQCTTFESLSGNTIVWNTKWSWSGGQGQVKSFANAALQFTPKKLSSVKSIDSTWTWNYSGSNIVADVAYDMFLSTSPGGDHNYEIMVWLGALGGAGPISSTGSPIATPTVAGIKFNLYLGPNGSMQVYSFVAQSTTKSFSGDMRDFFTYLEGNQGLSSDLYLVDVQAGTEPFSGSNAVFTVSDYSVSVA</sequence>
<proteinExistence type="inferred from homology"/>
<evidence type="ECO:0000250" key="1"/>
<evidence type="ECO:0000255" key="2"/>
<evidence type="ECO:0000305" key="3"/>
<comment type="function">
    <text evidence="1">Catalyzes endohydrolysis of 1,4-beta-D-glucosidic linkages in xyloglucan with retention of the beta-configuration of the glycosyl residues. Specific for xyloglucan and does not hydrolyze other cell wall components (By similarity).</text>
</comment>
<comment type="catalytic activity">
    <reaction>
        <text>xyloglucan + H2O = xyloglucan oligosaccharides.</text>
        <dbReference type="EC" id="3.2.1.151"/>
    </reaction>
</comment>
<comment type="subcellular location">
    <subcellularLocation>
        <location evidence="3">Secreted</location>
    </subcellularLocation>
</comment>
<comment type="similarity">
    <text evidence="3">Belongs to the glycosyl hydrolase 12 (cellulase H) family.</text>
</comment>
<organism>
    <name type="scientific">Neosartorya fischeri (strain ATCC 1020 / DSM 3700 / CBS 544.65 / FGSC A1164 / JCM 1740 / NRRL 181 / WB 181)</name>
    <name type="common">Aspergillus fischerianus</name>
    <dbReference type="NCBI Taxonomy" id="331117"/>
    <lineage>
        <taxon>Eukaryota</taxon>
        <taxon>Fungi</taxon>
        <taxon>Dikarya</taxon>
        <taxon>Ascomycota</taxon>
        <taxon>Pezizomycotina</taxon>
        <taxon>Eurotiomycetes</taxon>
        <taxon>Eurotiomycetidae</taxon>
        <taxon>Eurotiales</taxon>
        <taxon>Aspergillaceae</taxon>
        <taxon>Aspergillus</taxon>
        <taxon>Aspergillus subgen. Fumigati</taxon>
    </lineage>
</organism>
<dbReference type="EC" id="3.2.1.151"/>
<dbReference type="EMBL" id="DS027688">
    <property type="protein sequence ID" value="EAW23294.1"/>
    <property type="molecule type" value="Genomic_DNA"/>
</dbReference>
<dbReference type="RefSeq" id="XP_001265191.1">
    <property type="nucleotide sequence ID" value="XM_001265190.1"/>
</dbReference>
<dbReference type="SMR" id="A1D4F1"/>
<dbReference type="STRING" id="331117.A1D4F1"/>
<dbReference type="GlyCosmos" id="A1D4F1">
    <property type="glycosylation" value="2 sites, No reported glycans"/>
</dbReference>
<dbReference type="EnsemblFungi" id="EAW23294">
    <property type="protein sequence ID" value="EAW23294"/>
    <property type="gene ID" value="NFIA_020020"/>
</dbReference>
<dbReference type="GeneID" id="4591092"/>
<dbReference type="KEGG" id="nfi:NFIA_020020"/>
<dbReference type="VEuPathDB" id="FungiDB:NFIA_020020"/>
<dbReference type="eggNOG" id="ENOG502S675">
    <property type="taxonomic scope" value="Eukaryota"/>
</dbReference>
<dbReference type="HOGENOM" id="CLU_051064_0_1_1"/>
<dbReference type="OMA" id="NLWGQAQ"/>
<dbReference type="OrthoDB" id="95118at2759"/>
<dbReference type="Proteomes" id="UP000006702">
    <property type="component" value="Unassembled WGS sequence"/>
</dbReference>
<dbReference type="GO" id="GO:0005576">
    <property type="term" value="C:extracellular region"/>
    <property type="evidence" value="ECO:0007669"/>
    <property type="project" value="UniProtKB-SubCell"/>
</dbReference>
<dbReference type="GO" id="GO:0008810">
    <property type="term" value="F:cellulase activity"/>
    <property type="evidence" value="ECO:0007669"/>
    <property type="project" value="InterPro"/>
</dbReference>
<dbReference type="GO" id="GO:0033946">
    <property type="term" value="F:xyloglucan-specific endo-beta-1,4-glucanase activity"/>
    <property type="evidence" value="ECO:0007669"/>
    <property type="project" value="UniProtKB-EC"/>
</dbReference>
<dbReference type="GO" id="GO:0071555">
    <property type="term" value="P:cell wall organization"/>
    <property type="evidence" value="ECO:0007669"/>
    <property type="project" value="UniProtKB-KW"/>
</dbReference>
<dbReference type="GO" id="GO:0000272">
    <property type="term" value="P:polysaccharide catabolic process"/>
    <property type="evidence" value="ECO:0007669"/>
    <property type="project" value="UniProtKB-KW"/>
</dbReference>
<dbReference type="Gene3D" id="2.60.120.180">
    <property type="match status" value="1"/>
</dbReference>
<dbReference type="InterPro" id="IPR013320">
    <property type="entry name" value="ConA-like_dom_sf"/>
</dbReference>
<dbReference type="InterPro" id="IPR013319">
    <property type="entry name" value="GH11/12"/>
</dbReference>
<dbReference type="InterPro" id="IPR002594">
    <property type="entry name" value="GH12"/>
</dbReference>
<dbReference type="PANTHER" id="PTHR34002">
    <property type="entry name" value="BLR1656 PROTEIN"/>
    <property type="match status" value="1"/>
</dbReference>
<dbReference type="PANTHER" id="PTHR34002:SF9">
    <property type="entry name" value="XYLOGLUCAN-SPECIFIC ENDO-BETA-1,4-GLUCANASE A"/>
    <property type="match status" value="1"/>
</dbReference>
<dbReference type="Pfam" id="PF01670">
    <property type="entry name" value="Glyco_hydro_12"/>
    <property type="match status" value="1"/>
</dbReference>
<dbReference type="SUPFAM" id="SSF49899">
    <property type="entry name" value="Concanavalin A-like lectins/glucanases"/>
    <property type="match status" value="1"/>
</dbReference>
<keyword id="KW-0119">Carbohydrate metabolism</keyword>
<keyword id="KW-0961">Cell wall biogenesis/degradation</keyword>
<keyword id="KW-0325">Glycoprotein</keyword>
<keyword id="KW-0326">Glycosidase</keyword>
<keyword id="KW-0378">Hydrolase</keyword>
<keyword id="KW-0624">Polysaccharide degradation</keyword>
<keyword id="KW-1185">Reference proteome</keyword>
<keyword id="KW-0964">Secreted</keyword>
<keyword id="KW-0732">Signal</keyword>
<gene>
    <name type="primary">xgeA</name>
    <name type="ORF">NFIA_020020</name>
</gene>
<feature type="signal peptide" evidence="2">
    <location>
        <begin position="1"/>
        <end position="18"/>
    </location>
</feature>
<feature type="chain" id="PRO_0000394076" description="Probable xyloglucan-specific endo-beta-1,4-glucanase A">
    <location>
        <begin position="19"/>
        <end position="238"/>
    </location>
</feature>
<feature type="glycosylation site" description="N-linked (GlcNAc...) asparagine" evidence="2">
    <location>
        <position position="106"/>
    </location>
</feature>
<feature type="glycosylation site" description="N-linked (GlcNAc...) asparagine" evidence="2">
    <location>
        <position position="171"/>
    </location>
</feature>